<name>YBJL_ECO24</name>
<keyword id="KW-1003">Cell membrane</keyword>
<keyword id="KW-0472">Membrane</keyword>
<keyword id="KW-1185">Reference proteome</keyword>
<keyword id="KW-0677">Repeat</keyword>
<keyword id="KW-0812">Transmembrane</keyword>
<keyword id="KW-1133">Transmembrane helix</keyword>
<keyword id="KW-0813">Transport</keyword>
<comment type="subcellular location">
    <subcellularLocation>
        <location evidence="1">Cell membrane</location>
        <topology evidence="1">Multi-pass membrane protein</topology>
    </subcellularLocation>
</comment>
<comment type="similarity">
    <text evidence="1">Belongs to the AAE transporter (TC 2.A.81) family. YbjL subfamily.</text>
</comment>
<feature type="chain" id="PRO_0000329142" description="Putative transport protein YbjL">
    <location>
        <begin position="1"/>
        <end position="561"/>
    </location>
</feature>
<feature type="transmembrane region" description="Helical" evidence="1">
    <location>
        <begin position="8"/>
        <end position="28"/>
    </location>
</feature>
<feature type="transmembrane region" description="Helical" evidence="1">
    <location>
        <begin position="32"/>
        <end position="52"/>
    </location>
</feature>
<feature type="transmembrane region" description="Helical" evidence="1">
    <location>
        <begin position="66"/>
        <end position="86"/>
    </location>
</feature>
<feature type="transmembrane region" description="Helical" evidence="1">
    <location>
        <begin position="94"/>
        <end position="114"/>
    </location>
</feature>
<feature type="transmembrane region" description="Helical" evidence="1">
    <location>
        <begin position="158"/>
        <end position="178"/>
    </location>
</feature>
<feature type="transmembrane region" description="Helical" evidence="1">
    <location>
        <begin position="383"/>
        <end position="403"/>
    </location>
</feature>
<feature type="transmembrane region" description="Helical" evidence="1">
    <location>
        <begin position="406"/>
        <end position="426"/>
    </location>
</feature>
<feature type="transmembrane region" description="Helical" evidence="1">
    <location>
        <begin position="451"/>
        <end position="471"/>
    </location>
</feature>
<feature type="transmembrane region" description="Helical" evidence="1">
    <location>
        <begin position="475"/>
        <end position="495"/>
    </location>
</feature>
<feature type="transmembrane region" description="Helical" evidence="1">
    <location>
        <begin position="540"/>
        <end position="560"/>
    </location>
</feature>
<feature type="domain" description="RCK C-terminal 1" evidence="1">
    <location>
        <begin position="200"/>
        <end position="288"/>
    </location>
</feature>
<feature type="domain" description="RCK C-terminal 2" evidence="1">
    <location>
        <begin position="292"/>
        <end position="373"/>
    </location>
</feature>
<gene>
    <name evidence="1" type="primary">ybjL</name>
    <name type="ordered locus">EcE24377A_0919</name>
</gene>
<protein>
    <recommendedName>
        <fullName evidence="1">Putative transport protein YbjL</fullName>
    </recommendedName>
</protein>
<dbReference type="EMBL" id="CP000800">
    <property type="protein sequence ID" value="ABV17781.1"/>
    <property type="molecule type" value="Genomic_DNA"/>
</dbReference>
<dbReference type="RefSeq" id="WP_001024867.1">
    <property type="nucleotide sequence ID" value="NC_009801.1"/>
</dbReference>
<dbReference type="SMR" id="A7ZJR5"/>
<dbReference type="TCDB" id="2.A.81.1.4">
    <property type="family name" value="the aspartate:alanine exchanger (aaex) family"/>
</dbReference>
<dbReference type="KEGG" id="ecw:EcE24377A_0919"/>
<dbReference type="HOGENOM" id="CLU_035023_2_2_6"/>
<dbReference type="Proteomes" id="UP000001122">
    <property type="component" value="Chromosome"/>
</dbReference>
<dbReference type="GO" id="GO:0005886">
    <property type="term" value="C:plasma membrane"/>
    <property type="evidence" value="ECO:0007669"/>
    <property type="project" value="UniProtKB-SubCell"/>
</dbReference>
<dbReference type="GO" id="GO:0008324">
    <property type="term" value="F:monoatomic cation transmembrane transporter activity"/>
    <property type="evidence" value="ECO:0007669"/>
    <property type="project" value="InterPro"/>
</dbReference>
<dbReference type="GO" id="GO:0006813">
    <property type="term" value="P:potassium ion transport"/>
    <property type="evidence" value="ECO:0007669"/>
    <property type="project" value="InterPro"/>
</dbReference>
<dbReference type="FunFam" id="3.30.70.1450:FF:000003">
    <property type="entry name" value="Putative transport protein YbjL"/>
    <property type="match status" value="1"/>
</dbReference>
<dbReference type="Gene3D" id="3.30.70.1450">
    <property type="entry name" value="Regulator of K+ conductance, C-terminal domain"/>
    <property type="match status" value="2"/>
</dbReference>
<dbReference type="HAMAP" id="MF_01015">
    <property type="entry name" value="YbjL"/>
    <property type="match status" value="1"/>
</dbReference>
<dbReference type="InterPro" id="IPR050144">
    <property type="entry name" value="AAE_transporter"/>
</dbReference>
<dbReference type="InterPro" id="IPR006037">
    <property type="entry name" value="RCK_C"/>
</dbReference>
<dbReference type="InterPro" id="IPR036721">
    <property type="entry name" value="RCK_C_sf"/>
</dbReference>
<dbReference type="InterPro" id="IPR023017">
    <property type="entry name" value="Transp_YbjL_put"/>
</dbReference>
<dbReference type="InterPro" id="IPR006512">
    <property type="entry name" value="YidE_YbjL"/>
</dbReference>
<dbReference type="NCBIfam" id="NF003440">
    <property type="entry name" value="PRK04972.1"/>
    <property type="match status" value="1"/>
</dbReference>
<dbReference type="NCBIfam" id="TIGR01625">
    <property type="entry name" value="YidE_YbjL_dupl"/>
    <property type="match status" value="2"/>
</dbReference>
<dbReference type="PANTHER" id="PTHR30445">
    <property type="entry name" value="K(+)_H(+) ANTIPORTER SUBUNIT KHTT"/>
    <property type="match status" value="1"/>
</dbReference>
<dbReference type="PANTHER" id="PTHR30445:SF10">
    <property type="entry name" value="TRANSPORT PROTEIN YBJL-RELATED"/>
    <property type="match status" value="1"/>
</dbReference>
<dbReference type="Pfam" id="PF06826">
    <property type="entry name" value="Asp-Al_Ex"/>
    <property type="match status" value="2"/>
</dbReference>
<dbReference type="Pfam" id="PF02080">
    <property type="entry name" value="TrkA_C"/>
    <property type="match status" value="2"/>
</dbReference>
<dbReference type="SUPFAM" id="SSF116726">
    <property type="entry name" value="TrkA C-terminal domain-like"/>
    <property type="match status" value="2"/>
</dbReference>
<dbReference type="PROSITE" id="PS51202">
    <property type="entry name" value="RCK_C"/>
    <property type="match status" value="2"/>
</dbReference>
<evidence type="ECO:0000255" key="1">
    <source>
        <dbReference type="HAMAP-Rule" id="MF_01015"/>
    </source>
</evidence>
<reference key="1">
    <citation type="journal article" date="2008" name="J. Bacteriol.">
        <title>The pangenome structure of Escherichia coli: comparative genomic analysis of E. coli commensal and pathogenic isolates.</title>
        <authorList>
            <person name="Rasko D.A."/>
            <person name="Rosovitz M.J."/>
            <person name="Myers G.S.A."/>
            <person name="Mongodin E.F."/>
            <person name="Fricke W.F."/>
            <person name="Gajer P."/>
            <person name="Crabtree J."/>
            <person name="Sebaihia M."/>
            <person name="Thomson N.R."/>
            <person name="Chaudhuri R."/>
            <person name="Henderson I.R."/>
            <person name="Sperandio V."/>
            <person name="Ravel J."/>
        </authorList>
    </citation>
    <scope>NUCLEOTIDE SEQUENCE [LARGE SCALE GENOMIC DNA]</scope>
    <source>
        <strain>E24377A / ETEC</strain>
    </source>
</reference>
<sequence length="561" mass="60411">MNINVAELLNGNYILLLFVVLALGLCLGKLRLGSIQLGNSIGVLVVSLLLGQQHFSINTDALNLGFMLFIFCVGVEAGPNFFSIFFRDGKNYLMLALVMVGSALVIALGLGKLFGWDIGLTAGMLAGSMTSTPVLVGAGDTLRHFGMESRQLSLALDNLSLGYALTYLIGLVSLIVGARYLPKLQHQDLQTSAQQIARERGLDTDANRKVYLPVIRAYRVGPELVAWTDGKNLRELGIYRQTGCYIERIRRNGILANPDGDAVLQMGDEIALVGYPDAHARLDPSFRNGKEVFDRDLLDMRIVTEEVVVKNHNAVGKRLAQLKLTDHGCFLNRVIRSQIEMPIDDNVVLNKGDVLQVSGDARRVKTIADRIGFISIHSQVTDLLAFCAFFVIGLMIGMITFQFSTFSFGMGNAAGLLFAGIMLGFMRANHPTFGYIPQGALSMVKEFGLMVFMAGVGLSAGSGINNGLGAIGGQMLIAGLIVSLVPVVICFLFGAYVLRMNRALLFGAMMGARTCAPAMEIISDTARSNIPALGYAGTYAIANVLLTLAGTIIVMVWPGLG</sequence>
<proteinExistence type="inferred from homology"/>
<organism>
    <name type="scientific">Escherichia coli O139:H28 (strain E24377A / ETEC)</name>
    <dbReference type="NCBI Taxonomy" id="331111"/>
    <lineage>
        <taxon>Bacteria</taxon>
        <taxon>Pseudomonadati</taxon>
        <taxon>Pseudomonadota</taxon>
        <taxon>Gammaproteobacteria</taxon>
        <taxon>Enterobacterales</taxon>
        <taxon>Enterobacteriaceae</taxon>
        <taxon>Escherichia</taxon>
    </lineage>
</organism>
<accession>A7ZJR5</accession>